<organism>
    <name type="scientific">Panchlora viridis</name>
    <name type="common">Cockroach</name>
    <dbReference type="NCBI Taxonomy" id="344693"/>
    <lineage>
        <taxon>Eukaryota</taxon>
        <taxon>Metazoa</taxon>
        <taxon>Ecdysozoa</taxon>
        <taxon>Arthropoda</taxon>
        <taxon>Hexapoda</taxon>
        <taxon>Insecta</taxon>
        <taxon>Pterygota</taxon>
        <taxon>Neoptera</taxon>
        <taxon>Polyneoptera</taxon>
        <taxon>Dictyoptera</taxon>
        <taxon>Blattodea</taxon>
        <taxon>Blaberoidea</taxon>
        <taxon>Blaberidae</taxon>
        <taxon>Panchlorinae</taxon>
        <taxon>Panchlora</taxon>
    </lineage>
</organism>
<feature type="peptide" id="PRO_0000378661" description="Hypertrehalosaemic factor" evidence="3">
    <location>
        <begin position="1"/>
        <end position="10"/>
    </location>
</feature>
<feature type="modified residue" description="Pyrrolidone carboxylic acid" evidence="3">
    <location>
        <position position="1"/>
    </location>
</feature>
<feature type="modified residue" description="Threonine amide" evidence="3">
    <location>
        <position position="10"/>
    </location>
</feature>
<accession>P85853</accession>
<name>HTF_PANVI</name>
<comment type="function">
    <text evidence="5">Hypertrehalosaemic factors are neuropeptides that elevate the level of trehalose in the hemolymph (trehalose is the major carbohydrate in the hemolymph of insects).</text>
</comment>
<comment type="subcellular location">
    <subcellularLocation>
        <location evidence="5">Secreted</location>
    </subcellularLocation>
</comment>
<comment type="similarity">
    <text evidence="2">Belongs to the AKH/HRTH/RPCH family.</text>
</comment>
<sequence length="10" mass="1092">QVNFSPGWGT</sequence>
<keyword id="KW-0027">Amidation</keyword>
<keyword id="KW-0903">Direct protein sequencing</keyword>
<keyword id="KW-0372">Hormone</keyword>
<keyword id="KW-0527">Neuropeptide</keyword>
<keyword id="KW-0873">Pyrrolidone carboxylic acid</keyword>
<keyword id="KW-0964">Secreted</keyword>
<proteinExistence type="evidence at protein level"/>
<evidence type="ECO:0000250" key="1">
    <source>
        <dbReference type="UniProtKB" id="P67790"/>
    </source>
</evidence>
<evidence type="ECO:0000255" key="2"/>
<evidence type="ECO:0000269" key="3">
    <source>
    </source>
</evidence>
<evidence type="ECO:0000303" key="4">
    <source>
    </source>
</evidence>
<evidence type="ECO:0000305" key="5"/>
<dbReference type="GO" id="GO:0005576">
    <property type="term" value="C:extracellular region"/>
    <property type="evidence" value="ECO:0007669"/>
    <property type="project" value="UniProtKB-SubCell"/>
</dbReference>
<dbReference type="GO" id="GO:0005179">
    <property type="term" value="F:hormone activity"/>
    <property type="evidence" value="ECO:0007669"/>
    <property type="project" value="UniProtKB-KW"/>
</dbReference>
<dbReference type="GO" id="GO:0007218">
    <property type="term" value="P:neuropeptide signaling pathway"/>
    <property type="evidence" value="ECO:0007669"/>
    <property type="project" value="UniProtKB-KW"/>
</dbReference>
<dbReference type="InterPro" id="IPR002047">
    <property type="entry name" value="Adipokinetic_hormone_CS"/>
</dbReference>
<dbReference type="PROSITE" id="PS00256">
    <property type="entry name" value="AKH"/>
    <property type="match status" value="1"/>
</dbReference>
<protein>
    <recommendedName>
        <fullName evidence="1">Hypertrehalosaemic factor</fullName>
    </recommendedName>
    <alternativeName>
        <fullName evidence="4">Adipokinetic hormone 1</fullName>
        <shortName evidence="4">PanVi-AKH-1</shortName>
    </alternativeName>
    <alternativeName>
        <fullName evidence="1">Hypertrehalosaemic neuropeptide</fullName>
    </alternativeName>
</protein>
<reference evidence="5" key="1">
    <citation type="journal article" date="2009" name="BMC Evol. Biol.">
        <title>A proteomic approach for studying insect phylogeny: CAPA peptides of ancient insect taxa (Dictyoptera, Blattoptera) as a test case.</title>
        <authorList>
            <person name="Roth S."/>
            <person name="Fromm B."/>
            <person name="Gaede G."/>
            <person name="Predel R."/>
        </authorList>
    </citation>
    <scope>PROTEIN SEQUENCE</scope>
    <scope>PYROGLUTAMATE FORMATION AT GLN-1</scope>
    <scope>AMIDATION AT THR-10</scope>
    <source>
        <tissue evidence="3">Corpora cardiaca</tissue>
    </source>
</reference>